<evidence type="ECO:0000255" key="1">
    <source>
        <dbReference type="HAMAP-Rule" id="MF_00428"/>
    </source>
</evidence>
<keyword id="KW-0997">Cell inner membrane</keyword>
<keyword id="KW-1003">Cell membrane</keyword>
<keyword id="KW-0406">Ion transport</keyword>
<keyword id="KW-0472">Membrane</keyword>
<keyword id="KW-0520">NAD</keyword>
<keyword id="KW-0915">Sodium</keyword>
<keyword id="KW-0739">Sodium transport</keyword>
<keyword id="KW-1278">Translocase</keyword>
<keyword id="KW-0812">Transmembrane</keyword>
<keyword id="KW-1133">Transmembrane helix</keyword>
<keyword id="KW-0813">Transport</keyword>
<keyword id="KW-0830">Ubiquinone</keyword>
<sequence length="210" mass="22399">MADAKELKSVLIGPIVSNNPIALQILGVCSALAVTSKMETALVMTIALTAVCALSNLFISLIRNHIPSSVRIIVQMTIIASLVIVVDQVLQAYAYDVAKQLSVFVGLIITNCIVMGRAEAFAMKTPPMMSFMDGLGNGLGYGAILLSVGFVRELFGNGSLFGIEILSKISDGGWYQPNGLLLLPPSAFFLIGALIWIIRVMKPEQVEAKG</sequence>
<feature type="chain" id="PRO_1000191689" description="Na(+)-translocating NADH-quinone reductase subunit D">
    <location>
        <begin position="1"/>
        <end position="210"/>
    </location>
</feature>
<feature type="transmembrane region" description="Helical" evidence="1">
    <location>
        <begin position="9"/>
        <end position="29"/>
    </location>
</feature>
<feature type="transmembrane region" description="Helical" evidence="1">
    <location>
        <begin position="42"/>
        <end position="62"/>
    </location>
</feature>
<feature type="transmembrane region" description="Helical" evidence="1">
    <location>
        <begin position="72"/>
        <end position="92"/>
    </location>
</feature>
<feature type="transmembrane region" description="Helical" evidence="1">
    <location>
        <begin position="103"/>
        <end position="123"/>
    </location>
</feature>
<feature type="transmembrane region" description="Helical" evidence="1">
    <location>
        <begin position="131"/>
        <end position="151"/>
    </location>
</feature>
<feature type="transmembrane region" description="Helical" evidence="1">
    <location>
        <begin position="178"/>
        <end position="198"/>
    </location>
</feature>
<dbReference type="EC" id="7.2.1.1" evidence="1"/>
<dbReference type="EMBL" id="CP000472">
    <property type="protein sequence ID" value="ACJ27966.1"/>
    <property type="molecule type" value="Genomic_DNA"/>
</dbReference>
<dbReference type="RefSeq" id="WP_020911344.1">
    <property type="nucleotide sequence ID" value="NC_011566.1"/>
</dbReference>
<dbReference type="SMR" id="B8CKC7"/>
<dbReference type="STRING" id="225849.swp_1170"/>
<dbReference type="KEGG" id="swp:swp_1170"/>
<dbReference type="eggNOG" id="COG1347">
    <property type="taxonomic scope" value="Bacteria"/>
</dbReference>
<dbReference type="HOGENOM" id="CLU_046659_1_1_6"/>
<dbReference type="OrthoDB" id="9782945at2"/>
<dbReference type="Proteomes" id="UP000000753">
    <property type="component" value="Chromosome"/>
</dbReference>
<dbReference type="GO" id="GO:0005886">
    <property type="term" value="C:plasma membrane"/>
    <property type="evidence" value="ECO:0007669"/>
    <property type="project" value="UniProtKB-SubCell"/>
</dbReference>
<dbReference type="GO" id="GO:0016655">
    <property type="term" value="F:oxidoreductase activity, acting on NAD(P)H, quinone or similar compound as acceptor"/>
    <property type="evidence" value="ECO:0007669"/>
    <property type="project" value="UniProtKB-UniRule"/>
</dbReference>
<dbReference type="GO" id="GO:0006814">
    <property type="term" value="P:sodium ion transport"/>
    <property type="evidence" value="ECO:0007669"/>
    <property type="project" value="UniProtKB-UniRule"/>
</dbReference>
<dbReference type="HAMAP" id="MF_00428">
    <property type="entry name" value="NqrD"/>
    <property type="match status" value="1"/>
</dbReference>
<dbReference type="InterPro" id="IPR011292">
    <property type="entry name" value="NqrD"/>
</dbReference>
<dbReference type="InterPro" id="IPR003667">
    <property type="entry name" value="NqrDE/RnfAE"/>
</dbReference>
<dbReference type="NCBIfam" id="TIGR01939">
    <property type="entry name" value="nqrD"/>
    <property type="match status" value="1"/>
</dbReference>
<dbReference type="NCBIfam" id="NF006777">
    <property type="entry name" value="PRK09292.1"/>
    <property type="match status" value="1"/>
</dbReference>
<dbReference type="NCBIfam" id="NF009070">
    <property type="entry name" value="PRK12405.1"/>
    <property type="match status" value="1"/>
</dbReference>
<dbReference type="PANTHER" id="PTHR30586">
    <property type="entry name" value="ELECTRON TRANSPORT COMPLEX PROTEIN RNFE"/>
    <property type="match status" value="1"/>
</dbReference>
<dbReference type="PANTHER" id="PTHR30586:SF1">
    <property type="entry name" value="NA(+)-TRANSLOCATING NADH-QUINONE REDUCTASE SUBUNIT D"/>
    <property type="match status" value="1"/>
</dbReference>
<dbReference type="Pfam" id="PF02508">
    <property type="entry name" value="Rnf-Nqr"/>
    <property type="match status" value="1"/>
</dbReference>
<dbReference type="PIRSF" id="PIRSF006102">
    <property type="entry name" value="NQR_DE"/>
    <property type="match status" value="1"/>
</dbReference>
<name>NQRD_SHEPW</name>
<gene>
    <name evidence="1" type="primary">nqrD</name>
    <name type="ordered locus">swp_1170</name>
</gene>
<proteinExistence type="inferred from homology"/>
<accession>B8CKC7</accession>
<organism>
    <name type="scientific">Shewanella piezotolerans (strain WP3 / JCM 13877)</name>
    <dbReference type="NCBI Taxonomy" id="225849"/>
    <lineage>
        <taxon>Bacteria</taxon>
        <taxon>Pseudomonadati</taxon>
        <taxon>Pseudomonadota</taxon>
        <taxon>Gammaproteobacteria</taxon>
        <taxon>Alteromonadales</taxon>
        <taxon>Shewanellaceae</taxon>
        <taxon>Shewanella</taxon>
    </lineage>
</organism>
<protein>
    <recommendedName>
        <fullName evidence="1">Na(+)-translocating NADH-quinone reductase subunit D</fullName>
        <shortName evidence="1">Na(+)-NQR subunit D</shortName>
        <shortName evidence="1">Na(+)-translocating NQR subunit D</shortName>
        <ecNumber evidence="1">7.2.1.1</ecNumber>
    </recommendedName>
    <alternativeName>
        <fullName evidence="1">NQR complex subunit D</fullName>
    </alternativeName>
    <alternativeName>
        <fullName evidence="1">NQR-1 subunit D</fullName>
    </alternativeName>
</protein>
<comment type="function">
    <text evidence="1">NQR complex catalyzes the reduction of ubiquinone-1 to ubiquinol by two successive reactions, coupled with the transport of Na(+) ions from the cytoplasm to the periplasm. NqrA to NqrE are probably involved in the second step, the conversion of ubisemiquinone to ubiquinol.</text>
</comment>
<comment type="catalytic activity">
    <reaction evidence="1">
        <text>a ubiquinone + n Na(+)(in) + NADH + H(+) = a ubiquinol + n Na(+)(out) + NAD(+)</text>
        <dbReference type="Rhea" id="RHEA:47748"/>
        <dbReference type="Rhea" id="RHEA-COMP:9565"/>
        <dbReference type="Rhea" id="RHEA-COMP:9566"/>
        <dbReference type="ChEBI" id="CHEBI:15378"/>
        <dbReference type="ChEBI" id="CHEBI:16389"/>
        <dbReference type="ChEBI" id="CHEBI:17976"/>
        <dbReference type="ChEBI" id="CHEBI:29101"/>
        <dbReference type="ChEBI" id="CHEBI:57540"/>
        <dbReference type="ChEBI" id="CHEBI:57945"/>
        <dbReference type="EC" id="7.2.1.1"/>
    </reaction>
</comment>
<comment type="subunit">
    <text evidence="1">Composed of six subunits; NqrA, NqrB, NqrC, NqrD, NqrE and NqrF.</text>
</comment>
<comment type="subcellular location">
    <subcellularLocation>
        <location evidence="1">Cell inner membrane</location>
        <topology evidence="1">Multi-pass membrane protein</topology>
    </subcellularLocation>
</comment>
<comment type="similarity">
    <text evidence="1">Belongs to the NqrDE/RnfAE family.</text>
</comment>
<reference key="1">
    <citation type="journal article" date="2008" name="PLoS ONE">
        <title>Environmental adaptation: genomic analysis of the piezotolerant and psychrotolerant deep-sea iron reducing bacterium Shewanella piezotolerans WP3.</title>
        <authorList>
            <person name="Wang F."/>
            <person name="Wang J."/>
            <person name="Jian H."/>
            <person name="Zhang B."/>
            <person name="Li S."/>
            <person name="Wang F."/>
            <person name="Zeng X."/>
            <person name="Gao L."/>
            <person name="Bartlett D.H."/>
            <person name="Yu J."/>
            <person name="Hu S."/>
            <person name="Xiao X."/>
        </authorList>
    </citation>
    <scope>NUCLEOTIDE SEQUENCE [LARGE SCALE GENOMIC DNA]</scope>
    <source>
        <strain>WP3 / JCM 13877</strain>
    </source>
</reference>